<sequence>MMIPTEKIRIRLKAYDHKLLDQSTSEIVETARRTGSAVVGPIPLPTSINKFCVLRSPHVNKKSREQFEMRTHRRLLDILEPTQQTIDLLMKLELSAGVDVEIKLP</sequence>
<keyword id="KW-1185">Reference proteome</keyword>
<keyword id="KW-0687">Ribonucleoprotein</keyword>
<keyword id="KW-0689">Ribosomal protein</keyword>
<organism>
    <name type="scientific">Desulfotalea psychrophila (strain LSv54 / DSM 12343)</name>
    <dbReference type="NCBI Taxonomy" id="177439"/>
    <lineage>
        <taxon>Bacteria</taxon>
        <taxon>Pseudomonadati</taxon>
        <taxon>Thermodesulfobacteriota</taxon>
        <taxon>Desulfobulbia</taxon>
        <taxon>Desulfobulbales</taxon>
        <taxon>Desulfocapsaceae</taxon>
        <taxon>Desulfotalea</taxon>
    </lineage>
</organism>
<proteinExistence type="inferred from homology"/>
<comment type="function">
    <text evidence="1">Involved in the binding of tRNA to the ribosomes.</text>
</comment>
<comment type="subunit">
    <text evidence="1">Part of the 30S ribosomal subunit.</text>
</comment>
<comment type="similarity">
    <text evidence="1">Belongs to the universal ribosomal protein uS10 family.</text>
</comment>
<accession>Q6AP72</accession>
<gene>
    <name evidence="1" type="primary">rpsJ</name>
    <name type="ordered locus">DP1123</name>
</gene>
<reference key="1">
    <citation type="journal article" date="2004" name="Environ. Microbiol.">
        <title>The genome of Desulfotalea psychrophila, a sulfate-reducing bacterium from permanently cold Arctic sediments.</title>
        <authorList>
            <person name="Rabus R."/>
            <person name="Ruepp A."/>
            <person name="Frickey T."/>
            <person name="Rattei T."/>
            <person name="Fartmann B."/>
            <person name="Stark M."/>
            <person name="Bauer M."/>
            <person name="Zibat A."/>
            <person name="Lombardot T."/>
            <person name="Becker I."/>
            <person name="Amann J."/>
            <person name="Gellner K."/>
            <person name="Teeling H."/>
            <person name="Leuschner W.D."/>
            <person name="Gloeckner F.-O."/>
            <person name="Lupas A.N."/>
            <person name="Amann R."/>
            <person name="Klenk H.-P."/>
        </authorList>
    </citation>
    <scope>NUCLEOTIDE SEQUENCE [LARGE SCALE GENOMIC DNA]</scope>
    <source>
        <strain>DSM 12343 / LSv54</strain>
    </source>
</reference>
<evidence type="ECO:0000255" key="1">
    <source>
        <dbReference type="HAMAP-Rule" id="MF_00508"/>
    </source>
</evidence>
<evidence type="ECO:0000305" key="2"/>
<dbReference type="EMBL" id="CR522870">
    <property type="protein sequence ID" value="CAG35852.1"/>
    <property type="molecule type" value="Genomic_DNA"/>
</dbReference>
<dbReference type="SMR" id="Q6AP72"/>
<dbReference type="STRING" id="177439.DP1123"/>
<dbReference type="KEGG" id="dps:DP1123"/>
<dbReference type="eggNOG" id="COG0051">
    <property type="taxonomic scope" value="Bacteria"/>
</dbReference>
<dbReference type="HOGENOM" id="CLU_122625_1_3_7"/>
<dbReference type="Proteomes" id="UP000000602">
    <property type="component" value="Chromosome"/>
</dbReference>
<dbReference type="GO" id="GO:1990904">
    <property type="term" value="C:ribonucleoprotein complex"/>
    <property type="evidence" value="ECO:0007669"/>
    <property type="project" value="UniProtKB-KW"/>
</dbReference>
<dbReference type="GO" id="GO:0005840">
    <property type="term" value="C:ribosome"/>
    <property type="evidence" value="ECO:0007669"/>
    <property type="project" value="UniProtKB-KW"/>
</dbReference>
<dbReference type="GO" id="GO:0003735">
    <property type="term" value="F:structural constituent of ribosome"/>
    <property type="evidence" value="ECO:0007669"/>
    <property type="project" value="InterPro"/>
</dbReference>
<dbReference type="GO" id="GO:0000049">
    <property type="term" value="F:tRNA binding"/>
    <property type="evidence" value="ECO:0007669"/>
    <property type="project" value="UniProtKB-UniRule"/>
</dbReference>
<dbReference type="GO" id="GO:0006412">
    <property type="term" value="P:translation"/>
    <property type="evidence" value="ECO:0007669"/>
    <property type="project" value="UniProtKB-UniRule"/>
</dbReference>
<dbReference type="FunFam" id="3.30.70.600:FF:000001">
    <property type="entry name" value="30S ribosomal protein S10"/>
    <property type="match status" value="1"/>
</dbReference>
<dbReference type="Gene3D" id="3.30.70.600">
    <property type="entry name" value="Ribosomal protein S10 domain"/>
    <property type="match status" value="1"/>
</dbReference>
<dbReference type="HAMAP" id="MF_00508">
    <property type="entry name" value="Ribosomal_uS10"/>
    <property type="match status" value="1"/>
</dbReference>
<dbReference type="InterPro" id="IPR001848">
    <property type="entry name" value="Ribosomal_uS10"/>
</dbReference>
<dbReference type="InterPro" id="IPR018268">
    <property type="entry name" value="Ribosomal_uS10_CS"/>
</dbReference>
<dbReference type="InterPro" id="IPR027486">
    <property type="entry name" value="Ribosomal_uS10_dom"/>
</dbReference>
<dbReference type="InterPro" id="IPR036838">
    <property type="entry name" value="Ribosomal_uS10_dom_sf"/>
</dbReference>
<dbReference type="NCBIfam" id="NF001861">
    <property type="entry name" value="PRK00596.1"/>
    <property type="match status" value="1"/>
</dbReference>
<dbReference type="NCBIfam" id="TIGR01049">
    <property type="entry name" value="rpsJ_bact"/>
    <property type="match status" value="1"/>
</dbReference>
<dbReference type="PANTHER" id="PTHR11700">
    <property type="entry name" value="30S RIBOSOMAL PROTEIN S10 FAMILY MEMBER"/>
    <property type="match status" value="1"/>
</dbReference>
<dbReference type="Pfam" id="PF00338">
    <property type="entry name" value="Ribosomal_S10"/>
    <property type="match status" value="1"/>
</dbReference>
<dbReference type="PRINTS" id="PR00971">
    <property type="entry name" value="RIBOSOMALS10"/>
</dbReference>
<dbReference type="SMART" id="SM01403">
    <property type="entry name" value="Ribosomal_S10"/>
    <property type="match status" value="1"/>
</dbReference>
<dbReference type="SUPFAM" id="SSF54999">
    <property type="entry name" value="Ribosomal protein S10"/>
    <property type="match status" value="1"/>
</dbReference>
<dbReference type="PROSITE" id="PS00361">
    <property type="entry name" value="RIBOSOMAL_S10"/>
    <property type="match status" value="1"/>
</dbReference>
<name>RS10_DESPS</name>
<protein>
    <recommendedName>
        <fullName evidence="1">Small ribosomal subunit protein uS10</fullName>
    </recommendedName>
    <alternativeName>
        <fullName evidence="2">30S ribosomal protein S10</fullName>
    </alternativeName>
</protein>
<feature type="chain" id="PRO_0000237038" description="Small ribosomal subunit protein uS10">
    <location>
        <begin position="1"/>
        <end position="105"/>
    </location>
</feature>